<proteinExistence type="inferred from homology"/>
<comment type="function">
    <text evidence="1">Required for retention of late Golgi membrane proteins. Component of the retrieval machinery that functions by direct interaction with the cytosolic tails of certain TGN membrane proteins during the sorting/budding process at the prevacuolar compartment. Binds phosphatidylinositol 3-phosphate (PtdIns(P3)) (By similarity).</text>
</comment>
<comment type="subcellular location">
    <subcellularLocation>
        <location evidence="1">Cytoplasm</location>
    </subcellularLocation>
    <subcellularLocation>
        <location evidence="4">Golgi apparatus membrane</location>
        <topology evidence="4">Peripheral membrane protein</topology>
        <orientation evidence="4">Cytoplasmic side</orientation>
    </subcellularLocation>
    <subcellularLocation>
        <location evidence="4">Prevacuolar compartment membrane</location>
        <topology evidence="4">Peripheral membrane protein</topology>
        <orientation evidence="4">Cytoplasmic side</orientation>
    </subcellularLocation>
</comment>
<comment type="domain">
    <text evidence="1">The PX domain binds phosphatidylinositol 3-phosphate which is necessary for peripheral membrane localization.</text>
</comment>
<comment type="similarity">
    <text evidence="4">Belongs to the sorting nexin family.</text>
</comment>
<dbReference type="EMBL" id="CM003159">
    <property type="protein sequence ID" value="KIS66171.1"/>
    <property type="molecule type" value="Genomic_DNA"/>
</dbReference>
<dbReference type="RefSeq" id="XP_011392250.1">
    <property type="nucleotide sequence ID" value="XM_011393948.1"/>
</dbReference>
<dbReference type="SMR" id="Q4P1V3"/>
<dbReference type="STRING" id="237631.Q4P1V3"/>
<dbReference type="EnsemblFungi" id="KIS66171">
    <property type="protein sequence ID" value="KIS66171"/>
    <property type="gene ID" value="UMAG_05910"/>
</dbReference>
<dbReference type="GeneID" id="23565664"/>
<dbReference type="KEGG" id="uma:UMAG_05910"/>
<dbReference type="VEuPathDB" id="FungiDB:UMAG_05910"/>
<dbReference type="eggNOG" id="KOG2527">
    <property type="taxonomic scope" value="Eukaryota"/>
</dbReference>
<dbReference type="InParanoid" id="Q4P1V3"/>
<dbReference type="OMA" id="GWSKDQW"/>
<dbReference type="OrthoDB" id="5227681at2759"/>
<dbReference type="Proteomes" id="UP000000561">
    <property type="component" value="Chromosome 20"/>
</dbReference>
<dbReference type="GO" id="GO:0031901">
    <property type="term" value="C:early endosome membrane"/>
    <property type="evidence" value="ECO:0000318"/>
    <property type="project" value="GO_Central"/>
</dbReference>
<dbReference type="GO" id="GO:0000139">
    <property type="term" value="C:Golgi membrane"/>
    <property type="evidence" value="ECO:0007669"/>
    <property type="project" value="UniProtKB-SubCell"/>
</dbReference>
<dbReference type="GO" id="GO:0030904">
    <property type="term" value="C:retromer complex"/>
    <property type="evidence" value="ECO:0000318"/>
    <property type="project" value="GO_Central"/>
</dbReference>
<dbReference type="GO" id="GO:0032266">
    <property type="term" value="F:phosphatidylinositol-3-phosphate binding"/>
    <property type="evidence" value="ECO:0000318"/>
    <property type="project" value="GO_Central"/>
</dbReference>
<dbReference type="GO" id="GO:0032456">
    <property type="term" value="P:endocytic recycling"/>
    <property type="evidence" value="ECO:0000318"/>
    <property type="project" value="GO_Central"/>
</dbReference>
<dbReference type="GO" id="GO:0034499">
    <property type="term" value="P:late endosome to Golgi transport"/>
    <property type="evidence" value="ECO:0000318"/>
    <property type="project" value="GO_Central"/>
</dbReference>
<dbReference type="GO" id="GO:0015031">
    <property type="term" value="P:protein transport"/>
    <property type="evidence" value="ECO:0007669"/>
    <property type="project" value="UniProtKB-KW"/>
</dbReference>
<dbReference type="CDD" id="cd07295">
    <property type="entry name" value="PX_Grd19"/>
    <property type="match status" value="1"/>
</dbReference>
<dbReference type="FunFam" id="3.30.1520.10:FF:000030">
    <property type="entry name" value="Sorting nexin-3, variant"/>
    <property type="match status" value="1"/>
</dbReference>
<dbReference type="Gene3D" id="3.30.1520.10">
    <property type="entry name" value="Phox-like domain"/>
    <property type="match status" value="1"/>
</dbReference>
<dbReference type="InterPro" id="IPR001683">
    <property type="entry name" value="PX_dom"/>
</dbReference>
<dbReference type="InterPro" id="IPR036871">
    <property type="entry name" value="PX_dom_sf"/>
</dbReference>
<dbReference type="InterPro" id="IPR042138">
    <property type="entry name" value="PX_Grd19_PX"/>
</dbReference>
<dbReference type="InterPro" id="IPR051074">
    <property type="entry name" value="Sorting_Nexin"/>
</dbReference>
<dbReference type="PANTHER" id="PTHR45963">
    <property type="entry name" value="RE52028P"/>
    <property type="match status" value="1"/>
</dbReference>
<dbReference type="PANTHER" id="PTHR45963:SF2">
    <property type="entry name" value="RE52028P"/>
    <property type="match status" value="1"/>
</dbReference>
<dbReference type="Pfam" id="PF00787">
    <property type="entry name" value="PX"/>
    <property type="match status" value="1"/>
</dbReference>
<dbReference type="SMART" id="SM00312">
    <property type="entry name" value="PX"/>
    <property type="match status" value="1"/>
</dbReference>
<dbReference type="SUPFAM" id="SSF64268">
    <property type="entry name" value="PX domain"/>
    <property type="match status" value="1"/>
</dbReference>
<dbReference type="PROSITE" id="PS50195">
    <property type="entry name" value="PX"/>
    <property type="match status" value="1"/>
</dbReference>
<protein>
    <recommendedName>
        <fullName>Sorting nexin-3</fullName>
    </recommendedName>
</protein>
<gene>
    <name type="primary">SNX3</name>
    <name type="ORF">UMAG_05910</name>
</gene>
<feature type="chain" id="PRO_0000238591" description="Sorting nexin-3">
    <location>
        <begin position="1"/>
        <end position="394"/>
    </location>
</feature>
<feature type="domain" description="PX" evidence="2">
    <location>
        <begin position="272"/>
        <end position="389"/>
    </location>
</feature>
<feature type="region of interest" description="Disordered" evidence="3">
    <location>
        <begin position="1"/>
        <end position="82"/>
    </location>
</feature>
<feature type="region of interest" description="Disordered" evidence="3">
    <location>
        <begin position="116"/>
        <end position="226"/>
    </location>
</feature>
<feature type="compositionally biased region" description="Low complexity" evidence="3">
    <location>
        <begin position="31"/>
        <end position="82"/>
    </location>
</feature>
<feature type="compositionally biased region" description="Low complexity" evidence="3">
    <location>
        <begin position="131"/>
        <end position="178"/>
    </location>
</feature>
<feature type="compositionally biased region" description="Polar residues" evidence="3">
    <location>
        <begin position="179"/>
        <end position="207"/>
    </location>
</feature>
<feature type="binding site" evidence="1">
    <location>
        <position position="315"/>
    </location>
    <ligand>
        <name>a 1,2-diacyl-sn-glycero-3-phospho-(1D-myo-inositol-3-phosphate)</name>
        <dbReference type="ChEBI" id="CHEBI:58088"/>
    </ligand>
</feature>
<feature type="binding site" evidence="1">
    <location>
        <position position="317"/>
    </location>
    <ligand>
        <name>a 1,2-diacyl-sn-glycero-3-phospho-(1D-myo-inositol-3-phosphate)</name>
        <dbReference type="ChEBI" id="CHEBI:58088"/>
    </ligand>
</feature>
<feature type="binding site" evidence="1">
    <location>
        <position position="341"/>
    </location>
    <ligand>
        <name>a 1,2-diacyl-sn-glycero-3-phospho-(1D-myo-inositol-3-phosphate)</name>
        <dbReference type="ChEBI" id="CHEBI:58088"/>
    </ligand>
</feature>
<feature type="binding site" evidence="1">
    <location>
        <position position="346"/>
    </location>
    <ligand>
        <name>a 1,2-diacyl-sn-glycero-3-phospho-(1D-myo-inositol-3-phosphate)</name>
        <dbReference type="ChEBI" id="CHEBI:58088"/>
    </ligand>
</feature>
<feature type="binding site" evidence="1">
    <location>
        <position position="355"/>
    </location>
    <ligand>
        <name>a 1,2-diacyl-sn-glycero-3-phospho-(1D-myo-inositol-3-phosphate)</name>
        <dbReference type="ChEBI" id="CHEBI:58088"/>
    </ligand>
</feature>
<name>SNX3_MYCMD</name>
<accession>Q4P1V3</accession>
<accession>A0A0D1DQB6</accession>
<reference key="1">
    <citation type="journal article" date="2006" name="Nature">
        <title>Insights from the genome of the biotrophic fungal plant pathogen Ustilago maydis.</title>
        <authorList>
            <person name="Kaemper J."/>
            <person name="Kahmann R."/>
            <person name="Boelker M."/>
            <person name="Ma L.-J."/>
            <person name="Brefort T."/>
            <person name="Saville B.J."/>
            <person name="Banuett F."/>
            <person name="Kronstad J.W."/>
            <person name="Gold S.E."/>
            <person name="Mueller O."/>
            <person name="Perlin M.H."/>
            <person name="Woesten H.A.B."/>
            <person name="de Vries R."/>
            <person name="Ruiz-Herrera J."/>
            <person name="Reynaga-Pena C.G."/>
            <person name="Snetselaar K."/>
            <person name="McCann M."/>
            <person name="Perez-Martin J."/>
            <person name="Feldbruegge M."/>
            <person name="Basse C.W."/>
            <person name="Steinberg G."/>
            <person name="Ibeas J.I."/>
            <person name="Holloman W."/>
            <person name="Guzman P."/>
            <person name="Farman M.L."/>
            <person name="Stajich J.E."/>
            <person name="Sentandreu R."/>
            <person name="Gonzalez-Prieto J.M."/>
            <person name="Kennell J.C."/>
            <person name="Molina L."/>
            <person name="Schirawski J."/>
            <person name="Mendoza-Mendoza A."/>
            <person name="Greilinger D."/>
            <person name="Muench K."/>
            <person name="Roessel N."/>
            <person name="Scherer M."/>
            <person name="Vranes M."/>
            <person name="Ladendorf O."/>
            <person name="Vincon V."/>
            <person name="Fuchs U."/>
            <person name="Sandrock B."/>
            <person name="Meng S."/>
            <person name="Ho E.C.H."/>
            <person name="Cahill M.J."/>
            <person name="Boyce K.J."/>
            <person name="Klose J."/>
            <person name="Klosterman S.J."/>
            <person name="Deelstra H.J."/>
            <person name="Ortiz-Castellanos L."/>
            <person name="Li W."/>
            <person name="Sanchez-Alonso P."/>
            <person name="Schreier P.H."/>
            <person name="Haeuser-Hahn I."/>
            <person name="Vaupel M."/>
            <person name="Koopmann E."/>
            <person name="Friedrich G."/>
            <person name="Voss H."/>
            <person name="Schlueter T."/>
            <person name="Margolis J."/>
            <person name="Platt D."/>
            <person name="Swimmer C."/>
            <person name="Gnirke A."/>
            <person name="Chen F."/>
            <person name="Vysotskaia V."/>
            <person name="Mannhaupt G."/>
            <person name="Gueldener U."/>
            <person name="Muensterkoetter M."/>
            <person name="Haase D."/>
            <person name="Oesterheld M."/>
            <person name="Mewes H.-W."/>
            <person name="Mauceli E.W."/>
            <person name="DeCaprio D."/>
            <person name="Wade C.M."/>
            <person name="Butler J."/>
            <person name="Young S.K."/>
            <person name="Jaffe D.B."/>
            <person name="Calvo S.E."/>
            <person name="Nusbaum C."/>
            <person name="Galagan J.E."/>
            <person name="Birren B.W."/>
        </authorList>
    </citation>
    <scope>NUCLEOTIDE SEQUENCE [LARGE SCALE GENOMIC DNA]</scope>
    <source>
        <strain>DSM 14603 / FGSC 9021 / UM521</strain>
    </source>
</reference>
<reference key="2">
    <citation type="submission" date="2014-09" db="EMBL/GenBank/DDBJ databases">
        <authorList>
            <person name="Gueldener U."/>
            <person name="Muensterkoetter M."/>
            <person name="Walter M.C."/>
            <person name="Mannhaupt G."/>
            <person name="Kahmann R."/>
        </authorList>
    </citation>
    <scope>GENOME REANNOTATION</scope>
    <source>
        <strain>DSM 14603 / FGSC 9021 / UM521</strain>
    </source>
</reference>
<organism>
    <name type="scientific">Mycosarcoma maydis</name>
    <name type="common">Corn smut fungus</name>
    <name type="synonym">Ustilago maydis</name>
    <dbReference type="NCBI Taxonomy" id="5270"/>
    <lineage>
        <taxon>Eukaryota</taxon>
        <taxon>Fungi</taxon>
        <taxon>Dikarya</taxon>
        <taxon>Basidiomycota</taxon>
        <taxon>Ustilaginomycotina</taxon>
        <taxon>Ustilaginomycetes</taxon>
        <taxon>Ustilaginales</taxon>
        <taxon>Ustilaginaceae</taxon>
        <taxon>Mycosarcoma</taxon>
    </lineage>
</organism>
<evidence type="ECO:0000250" key="1"/>
<evidence type="ECO:0000255" key="2">
    <source>
        <dbReference type="PROSITE-ProRule" id="PRU00147"/>
    </source>
</evidence>
<evidence type="ECO:0000256" key="3">
    <source>
        <dbReference type="SAM" id="MobiDB-lite"/>
    </source>
</evidence>
<evidence type="ECO:0000305" key="4"/>
<sequence length="394" mass="42068">MAFYSAGPLSPGYNSTSAWGGNDNAEEDPWAAPGSSSSAAPPTTSSGFAPSPPGGFASFSTQQQQQQQQQQQRQQAGYFGGAPAAGASLAQEADAYQDGLMETSFGVGSGAGQNRLGGAAATVNPQSPHNAHSSSSTYGSAISSTHSQPSTQSQQPQSHALPSSAAQAQAARAGAFPSGVSTSQYQPTSQGAQGASRFQSHTPSTLLPSEPAGFTSHTSSDYSATAPRQLAPGYPLPASNYTVPAYSPFARVDSLSTPRRETVEDMYGVPENFLEVEVRSPLTHGVGRKMYTDYEIVTRTNIPAFKLRYSSVRRRYSDFEYFRDILERESTRVNIPPLPGKVFTNRFTDEVIEARREGLERFLQVVAGHPLLQTGSKVMAAFLQDSGWSKDQWL</sequence>
<keyword id="KW-0963">Cytoplasm</keyword>
<keyword id="KW-0333">Golgi apparatus</keyword>
<keyword id="KW-0446">Lipid-binding</keyword>
<keyword id="KW-0472">Membrane</keyword>
<keyword id="KW-0653">Protein transport</keyword>
<keyword id="KW-1185">Reference proteome</keyword>
<keyword id="KW-0813">Transport</keyword>